<proteinExistence type="inferred from homology"/>
<accession>Q255M1</accession>
<name>RL20_CHLFF</name>
<evidence type="ECO:0000255" key="1">
    <source>
        <dbReference type="HAMAP-Rule" id="MF_00382"/>
    </source>
</evidence>
<evidence type="ECO:0000305" key="2"/>
<dbReference type="EMBL" id="AP006861">
    <property type="protein sequence ID" value="BAE81017.1"/>
    <property type="molecule type" value="Genomic_DNA"/>
</dbReference>
<dbReference type="RefSeq" id="WP_011457798.1">
    <property type="nucleotide sequence ID" value="NC_007899.1"/>
</dbReference>
<dbReference type="SMR" id="Q255M1"/>
<dbReference type="STRING" id="264202.CF0245"/>
<dbReference type="KEGG" id="cfe:CF0245"/>
<dbReference type="eggNOG" id="COG0292">
    <property type="taxonomic scope" value="Bacteria"/>
</dbReference>
<dbReference type="HOGENOM" id="CLU_123265_0_1_0"/>
<dbReference type="OrthoDB" id="9808966at2"/>
<dbReference type="Proteomes" id="UP000001260">
    <property type="component" value="Chromosome"/>
</dbReference>
<dbReference type="GO" id="GO:1990904">
    <property type="term" value="C:ribonucleoprotein complex"/>
    <property type="evidence" value="ECO:0007669"/>
    <property type="project" value="UniProtKB-KW"/>
</dbReference>
<dbReference type="GO" id="GO:0005840">
    <property type="term" value="C:ribosome"/>
    <property type="evidence" value="ECO:0007669"/>
    <property type="project" value="UniProtKB-KW"/>
</dbReference>
<dbReference type="GO" id="GO:0019843">
    <property type="term" value="F:rRNA binding"/>
    <property type="evidence" value="ECO:0007669"/>
    <property type="project" value="UniProtKB-UniRule"/>
</dbReference>
<dbReference type="GO" id="GO:0003735">
    <property type="term" value="F:structural constituent of ribosome"/>
    <property type="evidence" value="ECO:0007669"/>
    <property type="project" value="InterPro"/>
</dbReference>
<dbReference type="GO" id="GO:0000027">
    <property type="term" value="P:ribosomal large subunit assembly"/>
    <property type="evidence" value="ECO:0007669"/>
    <property type="project" value="UniProtKB-UniRule"/>
</dbReference>
<dbReference type="GO" id="GO:0006412">
    <property type="term" value="P:translation"/>
    <property type="evidence" value="ECO:0007669"/>
    <property type="project" value="InterPro"/>
</dbReference>
<dbReference type="CDD" id="cd07026">
    <property type="entry name" value="Ribosomal_L20"/>
    <property type="match status" value="1"/>
</dbReference>
<dbReference type="FunFam" id="1.10.1900.20:FF:000001">
    <property type="entry name" value="50S ribosomal protein L20"/>
    <property type="match status" value="1"/>
</dbReference>
<dbReference type="Gene3D" id="6.10.160.10">
    <property type="match status" value="1"/>
</dbReference>
<dbReference type="Gene3D" id="1.10.1900.20">
    <property type="entry name" value="Ribosomal protein L20"/>
    <property type="match status" value="1"/>
</dbReference>
<dbReference type="HAMAP" id="MF_00382">
    <property type="entry name" value="Ribosomal_bL20"/>
    <property type="match status" value="1"/>
</dbReference>
<dbReference type="InterPro" id="IPR005813">
    <property type="entry name" value="Ribosomal_bL20"/>
</dbReference>
<dbReference type="InterPro" id="IPR049946">
    <property type="entry name" value="RIBOSOMAL_L20_CS"/>
</dbReference>
<dbReference type="InterPro" id="IPR035566">
    <property type="entry name" value="Ribosomal_protein_bL20_C"/>
</dbReference>
<dbReference type="NCBIfam" id="TIGR01032">
    <property type="entry name" value="rplT_bact"/>
    <property type="match status" value="1"/>
</dbReference>
<dbReference type="PANTHER" id="PTHR10986">
    <property type="entry name" value="39S RIBOSOMAL PROTEIN L20"/>
    <property type="match status" value="1"/>
</dbReference>
<dbReference type="Pfam" id="PF00453">
    <property type="entry name" value="Ribosomal_L20"/>
    <property type="match status" value="1"/>
</dbReference>
<dbReference type="PRINTS" id="PR00062">
    <property type="entry name" value="RIBOSOMALL20"/>
</dbReference>
<dbReference type="SUPFAM" id="SSF74731">
    <property type="entry name" value="Ribosomal protein L20"/>
    <property type="match status" value="1"/>
</dbReference>
<dbReference type="PROSITE" id="PS00937">
    <property type="entry name" value="RIBOSOMAL_L20"/>
    <property type="match status" value="1"/>
</dbReference>
<sequence length="121" mass="13801">MVRATGSVASRRRRKRILKQAKGFWGDRKGHIRQSRSSVMRAMAFNYMHRKDRKGDFRSLWIARLNVASRINGLSYSRLINGLKCAGIELNRKMLSEMAIHNPQGFAEVANQAKKALEATV</sequence>
<comment type="function">
    <text evidence="1">Binds directly to 23S ribosomal RNA and is necessary for the in vitro assembly process of the 50S ribosomal subunit. It is not involved in the protein synthesizing functions of that subunit.</text>
</comment>
<comment type="similarity">
    <text evidence="1">Belongs to the bacterial ribosomal protein bL20 family.</text>
</comment>
<organism>
    <name type="scientific">Chlamydia felis (strain Fe/C-56)</name>
    <name type="common">Chlamydophila felis</name>
    <dbReference type="NCBI Taxonomy" id="264202"/>
    <lineage>
        <taxon>Bacteria</taxon>
        <taxon>Pseudomonadati</taxon>
        <taxon>Chlamydiota</taxon>
        <taxon>Chlamydiia</taxon>
        <taxon>Chlamydiales</taxon>
        <taxon>Chlamydiaceae</taxon>
        <taxon>Chlamydia/Chlamydophila group</taxon>
        <taxon>Chlamydia</taxon>
    </lineage>
</organism>
<reference key="1">
    <citation type="journal article" date="2006" name="DNA Res.">
        <title>Genome sequence of the cat pathogen, Chlamydophila felis.</title>
        <authorList>
            <person name="Azuma Y."/>
            <person name="Hirakawa H."/>
            <person name="Yamashita A."/>
            <person name="Cai Y."/>
            <person name="Rahman M.A."/>
            <person name="Suzuki H."/>
            <person name="Mitaku S."/>
            <person name="Toh H."/>
            <person name="Goto S."/>
            <person name="Murakami T."/>
            <person name="Sugi K."/>
            <person name="Hayashi H."/>
            <person name="Fukushi H."/>
            <person name="Hattori M."/>
            <person name="Kuhara S."/>
            <person name="Shirai M."/>
        </authorList>
    </citation>
    <scope>NUCLEOTIDE SEQUENCE [LARGE SCALE GENOMIC DNA]</scope>
    <source>
        <strain>Fe/C-56</strain>
    </source>
</reference>
<protein>
    <recommendedName>
        <fullName evidence="1">Large ribosomal subunit protein bL20</fullName>
    </recommendedName>
    <alternativeName>
        <fullName evidence="2">50S ribosomal protein L20</fullName>
    </alternativeName>
</protein>
<keyword id="KW-0687">Ribonucleoprotein</keyword>
<keyword id="KW-0689">Ribosomal protein</keyword>
<keyword id="KW-0694">RNA-binding</keyword>
<keyword id="KW-0699">rRNA-binding</keyword>
<feature type="chain" id="PRO_0000243670" description="Large ribosomal subunit protein bL20">
    <location>
        <begin position="1"/>
        <end position="121"/>
    </location>
</feature>
<gene>
    <name evidence="1" type="primary">rplT</name>
    <name type="ordered locus">CF0245</name>
</gene>